<accession>E9QAU8</accession>
<accession>Q3UZA7</accession>
<comment type="function">
    <text evidence="4">E3 ubiquitin-protein ligase that acts as a regulator of motor axon elongation (PubMed:23610558). Required for efficient motor axon extension in the dorsal forelimb by enhancing the transcriptional responses of the SMAD1/SMAD5/SMAD8 effectors, which are activated downstream of BMP (PubMed:23610558). Acts by mediating ubiquitination and degradation of SMAD inhibitors such as SMAD6, SMAD7, SKI and SNON isoform of SKIL (PubMed:23610558).</text>
</comment>
<comment type="catalytic activity">
    <reaction evidence="4">
        <text>S-ubiquitinyl-[E2 ubiquitin-conjugating enzyme]-L-cysteine + [acceptor protein]-L-lysine = [E2 ubiquitin-conjugating enzyme]-L-cysteine + N(6)-ubiquitinyl-[acceptor protein]-L-lysine.</text>
        <dbReference type="EC" id="2.3.2.27"/>
    </reaction>
</comment>
<comment type="activity regulation">
    <text evidence="1">Binds free ubiquitin non-covalently via its RING-type zinc finger. Ubiquitin-binding leads to enhance the E3 ubiquitin-protein ligase activity by stabilizing the ubiquitin-conjugating enzyme E2 (donor ubiquitin) in the 'closed' conformation and activating ubiquitin transfer.</text>
</comment>
<comment type="subunit">
    <text evidence="1">Monomer; binding to the ubiquitin-conjugating enzyme E2 does not trigger homodimerization.</text>
</comment>
<comment type="subcellular location">
    <subcellularLocation>
        <location evidence="4">Nucleus</location>
    </subcellularLocation>
</comment>
<comment type="tissue specificity">
    <text evidence="4">Expressed in neurons of the nervous system.</text>
</comment>
<comment type="domain">
    <text evidence="1">The RING-type zinc finger mediates the E3 ubiquitin-protein ligase activity and binds directly to free ubiquitin. Non-covalent ubiquitin-binding stabilizes the ubiquitin-conjugating enzyme E2 (donor ubiquitin) in the 'closed' conformation and stimulates ubiquitin transfer.</text>
</comment>
<comment type="disruption phenotype">
    <text evidence="4">Around 10% of mice die at birth. While surviving pups are the same size as their littermates at birth, they fail to thrive and grow, reaching only 50% of the size of their siblings at postnatal day 15. They die before weaning during the first 3 postnatal weeks. Null pups display relaxed forepaws and reduced dorsiflexion. Hind limb defects are also observed. Defects are caused by inefficient growth of motor axons to distant muscles.</text>
</comment>
<comment type="similarity">
    <text evidence="6">Belongs to the Arkadia family.</text>
</comment>
<proteinExistence type="evidence at protein level"/>
<organism>
    <name type="scientific">Mus musculus</name>
    <name type="common">Mouse</name>
    <dbReference type="NCBI Taxonomy" id="10090"/>
    <lineage>
        <taxon>Eukaryota</taxon>
        <taxon>Metazoa</taxon>
        <taxon>Chordata</taxon>
        <taxon>Craniata</taxon>
        <taxon>Vertebrata</taxon>
        <taxon>Euteleostomi</taxon>
        <taxon>Mammalia</taxon>
        <taxon>Eutheria</taxon>
        <taxon>Euarchontoglires</taxon>
        <taxon>Glires</taxon>
        <taxon>Rodentia</taxon>
        <taxon>Myomorpha</taxon>
        <taxon>Muroidea</taxon>
        <taxon>Muridae</taxon>
        <taxon>Murinae</taxon>
        <taxon>Mus</taxon>
        <taxon>Mus</taxon>
    </lineage>
</organism>
<sequence length="347" mass="39736">MVLVHVGYLVLPVFGSVRNRGAPFQRSQHPHATSCRHFHLGPPQPQQLAPDFPLAHPVQSQPGLSAHMAPAHQHSGTLHQSLTPLPTLQFQDVTGPSFLPQALHQQYLLQQQLLEAQHRRLVSHPRRNQDRVSVHPHRLHPSFDFGHQLQTPQPRYLAEGTDWDLSVDAGLSPAQFQVRPIPQHYQHYLATPRMHHFPRNSSSTQMVVHEIRNYPYPQLHFLALQGLNPSRHTSAVRESYEELLQLEDRLGNVTRGAVQNTIERFTFPHKYKKRRPQDSKGKKDEGEESDTDEKCTICLSMLEDGEDVRRLPCMHLFHQLCVDQWLAMSKKCPICRVDIETQLGADS</sequence>
<gene>
    <name evidence="5" type="primary">Ark2c</name>
    <name evidence="7" type="synonym">Gm96</name>
    <name type="synonym">Rnf165</name>
</gene>
<name>ARK2C_MOUSE</name>
<keyword id="KW-0479">Metal-binding</keyword>
<keyword id="KW-0539">Nucleus</keyword>
<keyword id="KW-1185">Reference proteome</keyword>
<keyword id="KW-0808">Transferase</keyword>
<keyword id="KW-0833">Ubl conjugation pathway</keyword>
<keyword id="KW-0862">Zinc</keyword>
<keyword id="KW-0863">Zinc-finger</keyword>
<dbReference type="EC" id="2.3.2.27" evidence="4"/>
<dbReference type="EMBL" id="AC102135">
    <property type="status" value="NOT_ANNOTATED_CDS"/>
    <property type="molecule type" value="Genomic_DNA"/>
</dbReference>
<dbReference type="EMBL" id="AK133955">
    <property type="protein sequence ID" value="BAE21950.1"/>
    <property type="molecule type" value="mRNA"/>
</dbReference>
<dbReference type="CCDS" id="CCDS50327.1"/>
<dbReference type="RefSeq" id="NP_001157976.1">
    <property type="nucleotide sequence ID" value="NM_001164504.1"/>
</dbReference>
<dbReference type="SMR" id="E9QAU8"/>
<dbReference type="FunCoup" id="E9QAU8">
    <property type="interactions" value="353"/>
</dbReference>
<dbReference type="STRING" id="10090.ENSMUSP00000026494"/>
<dbReference type="PaxDb" id="10090-ENSMUSP00000026494"/>
<dbReference type="Antibodypedia" id="9062">
    <property type="antibodies" value="128 antibodies from 16 providers"/>
</dbReference>
<dbReference type="Ensembl" id="ENSMUST00000026494.14">
    <property type="protein sequence ID" value="ENSMUSP00000026494.7"/>
    <property type="gene ID" value="ENSMUSG00000025427.16"/>
</dbReference>
<dbReference type="GeneID" id="225743"/>
<dbReference type="KEGG" id="mmu:225743"/>
<dbReference type="UCSC" id="uc008frj.2">
    <property type="organism name" value="mouse"/>
</dbReference>
<dbReference type="AGR" id="MGI:2444521"/>
<dbReference type="CTD" id="494470"/>
<dbReference type="MGI" id="MGI:2444521">
    <property type="gene designation" value="Ark2c"/>
</dbReference>
<dbReference type="VEuPathDB" id="HostDB:ENSMUSG00000025427"/>
<dbReference type="eggNOG" id="KOG0800">
    <property type="taxonomic scope" value="Eukaryota"/>
</dbReference>
<dbReference type="GeneTree" id="ENSGT00940000156997"/>
<dbReference type="HOGENOM" id="CLU_056012_0_0_1"/>
<dbReference type="InParanoid" id="E9QAU8"/>
<dbReference type="OMA" id="HFTRHHN"/>
<dbReference type="OrthoDB" id="8062037at2759"/>
<dbReference type="PhylomeDB" id="E9QAU8"/>
<dbReference type="TreeFam" id="TF317681"/>
<dbReference type="BioGRID-ORCS" id="225743">
    <property type="hits" value="0 hits in 77 CRISPR screens"/>
</dbReference>
<dbReference type="ChiTaRS" id="Rnf165">
    <property type="organism name" value="mouse"/>
</dbReference>
<dbReference type="PRO" id="PR:E9QAU8"/>
<dbReference type="Proteomes" id="UP000000589">
    <property type="component" value="Chromosome 18"/>
</dbReference>
<dbReference type="RNAct" id="E9QAU8">
    <property type="molecule type" value="protein"/>
</dbReference>
<dbReference type="Bgee" id="ENSMUSG00000025427">
    <property type="expression patterns" value="Expressed in rostral migratory stream and 192 other cell types or tissues"/>
</dbReference>
<dbReference type="ExpressionAtlas" id="E9QAU8">
    <property type="expression patterns" value="baseline and differential"/>
</dbReference>
<dbReference type="GO" id="GO:0005634">
    <property type="term" value="C:nucleus"/>
    <property type="evidence" value="ECO:0000314"/>
    <property type="project" value="MGI"/>
</dbReference>
<dbReference type="GO" id="GO:0032991">
    <property type="term" value="C:protein-containing complex"/>
    <property type="evidence" value="ECO:0000314"/>
    <property type="project" value="MGI"/>
</dbReference>
<dbReference type="GO" id="GO:0061630">
    <property type="term" value="F:ubiquitin protein ligase activity"/>
    <property type="evidence" value="ECO:0000314"/>
    <property type="project" value="MGI"/>
</dbReference>
<dbReference type="GO" id="GO:0008270">
    <property type="term" value="F:zinc ion binding"/>
    <property type="evidence" value="ECO:0007669"/>
    <property type="project" value="UniProtKB-KW"/>
</dbReference>
<dbReference type="GO" id="GO:0007409">
    <property type="term" value="P:axonogenesis"/>
    <property type="evidence" value="ECO:0000315"/>
    <property type="project" value="MGI"/>
</dbReference>
<dbReference type="GO" id="GO:0035136">
    <property type="term" value="P:forelimb morphogenesis"/>
    <property type="evidence" value="ECO:0000315"/>
    <property type="project" value="MGI"/>
</dbReference>
<dbReference type="GO" id="GO:0060384">
    <property type="term" value="P:innervation"/>
    <property type="evidence" value="ECO:0000315"/>
    <property type="project" value="MGI"/>
</dbReference>
<dbReference type="GO" id="GO:0060173">
    <property type="term" value="P:limb development"/>
    <property type="evidence" value="ECO:0000316"/>
    <property type="project" value="MGI"/>
</dbReference>
<dbReference type="GO" id="GO:0008045">
    <property type="term" value="P:motor neuron axon guidance"/>
    <property type="evidence" value="ECO:0000315"/>
    <property type="project" value="MGI"/>
</dbReference>
<dbReference type="GO" id="GO:0061061">
    <property type="term" value="P:muscle structure development"/>
    <property type="evidence" value="ECO:0000315"/>
    <property type="project" value="MGI"/>
</dbReference>
<dbReference type="GO" id="GO:0030513">
    <property type="term" value="P:positive regulation of BMP signaling pathway"/>
    <property type="evidence" value="ECO:0000315"/>
    <property type="project" value="MGI"/>
</dbReference>
<dbReference type="GO" id="GO:0030163">
    <property type="term" value="P:protein catabolic process"/>
    <property type="evidence" value="ECO:0000314"/>
    <property type="project" value="MGI"/>
</dbReference>
<dbReference type="GO" id="GO:0000209">
    <property type="term" value="P:protein polyubiquitination"/>
    <property type="evidence" value="ECO:0000314"/>
    <property type="project" value="MGI"/>
</dbReference>
<dbReference type="CDD" id="cd16682">
    <property type="entry name" value="RING-H2_RNF165"/>
    <property type="match status" value="1"/>
</dbReference>
<dbReference type="FunFam" id="3.30.40.10:FF:000058">
    <property type="entry name" value="E3 ubiquitin-protein ligase Arkadia isoform X4"/>
    <property type="match status" value="1"/>
</dbReference>
<dbReference type="Gene3D" id="3.30.40.10">
    <property type="entry name" value="Zinc/RING finger domain, C3HC4 (zinc finger)"/>
    <property type="match status" value="1"/>
</dbReference>
<dbReference type="InterPro" id="IPR045191">
    <property type="entry name" value="MBR1/2-like"/>
</dbReference>
<dbReference type="InterPro" id="IPR001841">
    <property type="entry name" value="Znf_RING"/>
</dbReference>
<dbReference type="InterPro" id="IPR011016">
    <property type="entry name" value="Znf_RING-CH"/>
</dbReference>
<dbReference type="InterPro" id="IPR013083">
    <property type="entry name" value="Znf_RING/FYVE/PHD"/>
</dbReference>
<dbReference type="PANTHER" id="PTHR22937:SF65">
    <property type="entry name" value="E3 UBIQUITIN-PROTEIN LIGASE ARK2C"/>
    <property type="match status" value="1"/>
</dbReference>
<dbReference type="PANTHER" id="PTHR22937">
    <property type="entry name" value="E3 UBIQUITIN-PROTEIN LIGASE RNF165"/>
    <property type="match status" value="1"/>
</dbReference>
<dbReference type="Pfam" id="PF13639">
    <property type="entry name" value="zf-RING_2"/>
    <property type="match status" value="1"/>
</dbReference>
<dbReference type="SMART" id="SM00184">
    <property type="entry name" value="RING"/>
    <property type="match status" value="1"/>
</dbReference>
<dbReference type="SMART" id="SM00744">
    <property type="entry name" value="RINGv"/>
    <property type="match status" value="1"/>
</dbReference>
<dbReference type="SUPFAM" id="SSF57850">
    <property type="entry name" value="RING/U-box"/>
    <property type="match status" value="1"/>
</dbReference>
<dbReference type="PROSITE" id="PS50089">
    <property type="entry name" value="ZF_RING_2"/>
    <property type="match status" value="1"/>
</dbReference>
<evidence type="ECO:0000250" key="1">
    <source>
        <dbReference type="UniProtKB" id="Q6ZSG1"/>
    </source>
</evidence>
<evidence type="ECO:0000255" key="2">
    <source>
        <dbReference type="PROSITE-ProRule" id="PRU00175"/>
    </source>
</evidence>
<evidence type="ECO:0000256" key="3">
    <source>
        <dbReference type="SAM" id="MobiDB-lite"/>
    </source>
</evidence>
<evidence type="ECO:0000269" key="4">
    <source>
    </source>
</evidence>
<evidence type="ECO:0000303" key="5">
    <source>
    </source>
</evidence>
<evidence type="ECO:0000305" key="6"/>
<evidence type="ECO:0000312" key="7">
    <source>
        <dbReference type="MGI" id="MGI:2444521"/>
    </source>
</evidence>
<protein>
    <recommendedName>
        <fullName>E3 ubiquitin-protein ligase ARK2C</fullName>
        <ecNumber evidence="4">2.3.2.27</ecNumber>
    </recommendedName>
    <alternativeName>
        <fullName evidence="5">Arkadia-like protein 2C</fullName>
        <shortName evidence="5">Ark2C</shortName>
    </alternativeName>
    <alternativeName>
        <fullName evidence="7">RING finger protein 165</fullName>
    </alternativeName>
</protein>
<feature type="chain" id="PRO_0000415819" description="E3 ubiquitin-protein ligase ARK2C">
    <location>
        <begin position="1"/>
        <end position="347"/>
    </location>
</feature>
<feature type="zinc finger region" description="RING-type; atypical" evidence="2">
    <location>
        <begin position="295"/>
        <end position="336"/>
    </location>
</feature>
<feature type="region of interest" description="Disordered" evidence="3">
    <location>
        <begin position="23"/>
        <end position="79"/>
    </location>
</feature>
<feature type="region of interest" description="Ubiquitin binding" evidence="1">
    <location>
        <begin position="267"/>
        <end position="269"/>
    </location>
</feature>
<feature type="region of interest" description="Disordered" evidence="3">
    <location>
        <begin position="268"/>
        <end position="289"/>
    </location>
</feature>
<feature type="region of interest" description="Ubiquitin binding" evidence="1">
    <location>
        <begin position="310"/>
        <end position="314"/>
    </location>
</feature>
<feature type="compositionally biased region" description="Basic and acidic residues" evidence="3">
    <location>
        <begin position="276"/>
        <end position="285"/>
    </location>
</feature>
<feature type="binding site" evidence="1">
    <location>
        <position position="295"/>
    </location>
    <ligand>
        <name>Zn(2+)</name>
        <dbReference type="ChEBI" id="CHEBI:29105"/>
    </ligand>
</feature>
<feature type="binding site" evidence="1">
    <location>
        <position position="298"/>
    </location>
    <ligand>
        <name>Zn(2+)</name>
        <dbReference type="ChEBI" id="CHEBI:29105"/>
    </ligand>
</feature>
<feature type="binding site" evidence="1">
    <location>
        <position position="318"/>
    </location>
    <ligand>
        <name>Zn(2+)</name>
        <dbReference type="ChEBI" id="CHEBI:29105"/>
    </ligand>
</feature>
<feature type="binding site" evidence="1">
    <location>
        <position position="321"/>
    </location>
    <ligand>
        <name>Zn(2+)</name>
        <dbReference type="ChEBI" id="CHEBI:29105"/>
    </ligand>
</feature>
<reference key="1">
    <citation type="journal article" date="2009" name="PLoS Biol.">
        <title>Lineage-specific biology revealed by a finished genome assembly of the mouse.</title>
        <authorList>
            <person name="Church D.M."/>
            <person name="Goodstadt L."/>
            <person name="Hillier L.W."/>
            <person name="Zody M.C."/>
            <person name="Goldstein S."/>
            <person name="She X."/>
            <person name="Bult C.J."/>
            <person name="Agarwala R."/>
            <person name="Cherry J.L."/>
            <person name="DiCuccio M."/>
            <person name="Hlavina W."/>
            <person name="Kapustin Y."/>
            <person name="Meric P."/>
            <person name="Maglott D."/>
            <person name="Birtle Z."/>
            <person name="Marques A.C."/>
            <person name="Graves T."/>
            <person name="Zhou S."/>
            <person name="Teague B."/>
            <person name="Potamousis K."/>
            <person name="Churas C."/>
            <person name="Place M."/>
            <person name="Herschleb J."/>
            <person name="Runnheim R."/>
            <person name="Forrest D."/>
            <person name="Amos-Landgraf J."/>
            <person name="Schwartz D.C."/>
            <person name="Cheng Z."/>
            <person name="Lindblad-Toh K."/>
            <person name="Eichler E.E."/>
            <person name="Ponting C.P."/>
        </authorList>
    </citation>
    <scope>NUCLEOTIDE SEQUENCE [LARGE SCALE GENOMIC DNA]</scope>
    <source>
        <strain>C57BL/6J</strain>
    </source>
</reference>
<reference key="2">
    <citation type="journal article" date="2005" name="Science">
        <title>The transcriptional landscape of the mammalian genome.</title>
        <authorList>
            <person name="Carninci P."/>
            <person name="Kasukawa T."/>
            <person name="Katayama S."/>
            <person name="Gough J."/>
            <person name="Frith M.C."/>
            <person name="Maeda N."/>
            <person name="Oyama R."/>
            <person name="Ravasi T."/>
            <person name="Lenhard B."/>
            <person name="Wells C."/>
            <person name="Kodzius R."/>
            <person name="Shimokawa K."/>
            <person name="Bajic V.B."/>
            <person name="Brenner S.E."/>
            <person name="Batalov S."/>
            <person name="Forrest A.R."/>
            <person name="Zavolan M."/>
            <person name="Davis M.J."/>
            <person name="Wilming L.G."/>
            <person name="Aidinis V."/>
            <person name="Allen J.E."/>
            <person name="Ambesi-Impiombato A."/>
            <person name="Apweiler R."/>
            <person name="Aturaliya R.N."/>
            <person name="Bailey T.L."/>
            <person name="Bansal M."/>
            <person name="Baxter L."/>
            <person name="Beisel K.W."/>
            <person name="Bersano T."/>
            <person name="Bono H."/>
            <person name="Chalk A.M."/>
            <person name="Chiu K.P."/>
            <person name="Choudhary V."/>
            <person name="Christoffels A."/>
            <person name="Clutterbuck D.R."/>
            <person name="Crowe M.L."/>
            <person name="Dalla E."/>
            <person name="Dalrymple B.P."/>
            <person name="de Bono B."/>
            <person name="Della Gatta G."/>
            <person name="di Bernardo D."/>
            <person name="Down T."/>
            <person name="Engstrom P."/>
            <person name="Fagiolini M."/>
            <person name="Faulkner G."/>
            <person name="Fletcher C.F."/>
            <person name="Fukushima T."/>
            <person name="Furuno M."/>
            <person name="Futaki S."/>
            <person name="Gariboldi M."/>
            <person name="Georgii-Hemming P."/>
            <person name="Gingeras T.R."/>
            <person name="Gojobori T."/>
            <person name="Green R.E."/>
            <person name="Gustincich S."/>
            <person name="Harbers M."/>
            <person name="Hayashi Y."/>
            <person name="Hensch T.K."/>
            <person name="Hirokawa N."/>
            <person name="Hill D."/>
            <person name="Huminiecki L."/>
            <person name="Iacono M."/>
            <person name="Ikeo K."/>
            <person name="Iwama A."/>
            <person name="Ishikawa T."/>
            <person name="Jakt M."/>
            <person name="Kanapin A."/>
            <person name="Katoh M."/>
            <person name="Kawasawa Y."/>
            <person name="Kelso J."/>
            <person name="Kitamura H."/>
            <person name="Kitano H."/>
            <person name="Kollias G."/>
            <person name="Krishnan S.P."/>
            <person name="Kruger A."/>
            <person name="Kummerfeld S.K."/>
            <person name="Kurochkin I.V."/>
            <person name="Lareau L.F."/>
            <person name="Lazarevic D."/>
            <person name="Lipovich L."/>
            <person name="Liu J."/>
            <person name="Liuni S."/>
            <person name="McWilliam S."/>
            <person name="Madan Babu M."/>
            <person name="Madera M."/>
            <person name="Marchionni L."/>
            <person name="Matsuda H."/>
            <person name="Matsuzawa S."/>
            <person name="Miki H."/>
            <person name="Mignone F."/>
            <person name="Miyake S."/>
            <person name="Morris K."/>
            <person name="Mottagui-Tabar S."/>
            <person name="Mulder N."/>
            <person name="Nakano N."/>
            <person name="Nakauchi H."/>
            <person name="Ng P."/>
            <person name="Nilsson R."/>
            <person name="Nishiguchi S."/>
            <person name="Nishikawa S."/>
            <person name="Nori F."/>
            <person name="Ohara O."/>
            <person name="Okazaki Y."/>
            <person name="Orlando V."/>
            <person name="Pang K.C."/>
            <person name="Pavan W.J."/>
            <person name="Pavesi G."/>
            <person name="Pesole G."/>
            <person name="Petrovsky N."/>
            <person name="Piazza S."/>
            <person name="Reed J."/>
            <person name="Reid J.F."/>
            <person name="Ring B.Z."/>
            <person name="Ringwald M."/>
            <person name="Rost B."/>
            <person name="Ruan Y."/>
            <person name="Salzberg S.L."/>
            <person name="Sandelin A."/>
            <person name="Schneider C."/>
            <person name="Schoenbach C."/>
            <person name="Sekiguchi K."/>
            <person name="Semple C.A."/>
            <person name="Seno S."/>
            <person name="Sessa L."/>
            <person name="Sheng Y."/>
            <person name="Shibata Y."/>
            <person name="Shimada H."/>
            <person name="Shimada K."/>
            <person name="Silva D."/>
            <person name="Sinclair B."/>
            <person name="Sperling S."/>
            <person name="Stupka E."/>
            <person name="Sugiura K."/>
            <person name="Sultana R."/>
            <person name="Takenaka Y."/>
            <person name="Taki K."/>
            <person name="Tammoja K."/>
            <person name="Tan S.L."/>
            <person name="Tang S."/>
            <person name="Taylor M.S."/>
            <person name="Tegner J."/>
            <person name="Teichmann S.A."/>
            <person name="Ueda H.R."/>
            <person name="van Nimwegen E."/>
            <person name="Verardo R."/>
            <person name="Wei C.L."/>
            <person name="Yagi K."/>
            <person name="Yamanishi H."/>
            <person name="Zabarovsky E."/>
            <person name="Zhu S."/>
            <person name="Zimmer A."/>
            <person name="Hide W."/>
            <person name="Bult C."/>
            <person name="Grimmond S.M."/>
            <person name="Teasdale R.D."/>
            <person name="Liu E.T."/>
            <person name="Brusic V."/>
            <person name="Quackenbush J."/>
            <person name="Wahlestedt C."/>
            <person name="Mattick J.S."/>
            <person name="Hume D.A."/>
            <person name="Kai C."/>
            <person name="Sasaki D."/>
            <person name="Tomaru Y."/>
            <person name="Fukuda S."/>
            <person name="Kanamori-Katayama M."/>
            <person name="Suzuki M."/>
            <person name="Aoki J."/>
            <person name="Arakawa T."/>
            <person name="Iida J."/>
            <person name="Imamura K."/>
            <person name="Itoh M."/>
            <person name="Kato T."/>
            <person name="Kawaji H."/>
            <person name="Kawagashira N."/>
            <person name="Kawashima T."/>
            <person name="Kojima M."/>
            <person name="Kondo S."/>
            <person name="Konno H."/>
            <person name="Nakano K."/>
            <person name="Ninomiya N."/>
            <person name="Nishio T."/>
            <person name="Okada M."/>
            <person name="Plessy C."/>
            <person name="Shibata K."/>
            <person name="Shiraki T."/>
            <person name="Suzuki S."/>
            <person name="Tagami M."/>
            <person name="Waki K."/>
            <person name="Watahiki A."/>
            <person name="Okamura-Oho Y."/>
            <person name="Suzuki H."/>
            <person name="Kawai J."/>
            <person name="Hayashizaki Y."/>
        </authorList>
    </citation>
    <scope>NUCLEOTIDE SEQUENCE [LARGE SCALE MRNA] OF 194-347</scope>
    <source>
        <strain>C57BL/6J</strain>
    </source>
</reference>
<reference key="3">
    <citation type="journal article" date="2013" name="PLoS Biol.">
        <title>Rnf165/Ark2C enhances BMP-Smad signaling to mediate motor axon extension.</title>
        <authorList>
            <person name="Kelly C.E."/>
            <person name="Thymiakou E."/>
            <person name="Dixon J.E."/>
            <person name="Tanaka S."/>
            <person name="Godwin J."/>
            <person name="Episkopou V."/>
        </authorList>
    </citation>
    <scope>FUNCTION</scope>
    <scope>CATALYTIC ACTIVITY</scope>
    <scope>SUBCELLULAR LOCATION</scope>
    <scope>DISRUPTION PHENOTYPE</scope>
    <scope>TISSUE SPECIFICITY</scope>
</reference>